<keyword id="KW-0012">Acyltransferase</keyword>
<keyword id="KW-0450">Lipoyl</keyword>
<keyword id="KW-1185">Reference proteome</keyword>
<keyword id="KW-0677">Repeat</keyword>
<keyword id="KW-0808">Transferase</keyword>
<accession>P65634</accession>
<accession>A0A1R3Y0P9</accession>
<accession>Q10381</accession>
<accession>X2BJM2</accession>
<reference key="1">
    <citation type="journal article" date="2003" name="Proc. Natl. Acad. Sci. U.S.A.">
        <title>The complete genome sequence of Mycobacterium bovis.</title>
        <authorList>
            <person name="Garnier T."/>
            <person name="Eiglmeier K."/>
            <person name="Camus J.-C."/>
            <person name="Medina N."/>
            <person name="Mansoor H."/>
            <person name="Pryor M."/>
            <person name="Duthoy S."/>
            <person name="Grondin S."/>
            <person name="Lacroix C."/>
            <person name="Monsempe C."/>
            <person name="Simon S."/>
            <person name="Harris B."/>
            <person name="Atkin R."/>
            <person name="Doggett J."/>
            <person name="Mayes R."/>
            <person name="Keating L."/>
            <person name="Wheeler P.R."/>
            <person name="Parkhill J."/>
            <person name="Barrell B.G."/>
            <person name="Cole S.T."/>
            <person name="Gordon S.V."/>
            <person name="Hewinson R.G."/>
        </authorList>
    </citation>
    <scope>NUCLEOTIDE SEQUENCE [LARGE SCALE GENOMIC DNA]</scope>
    <source>
        <strain>ATCC BAA-935 / AF2122/97</strain>
    </source>
</reference>
<reference key="2">
    <citation type="journal article" date="2017" name="Genome Announc.">
        <title>Updated reference genome sequence and annotation of Mycobacterium bovis AF2122/97.</title>
        <authorList>
            <person name="Malone K.M."/>
            <person name="Farrell D."/>
            <person name="Stuber T.P."/>
            <person name="Schubert O.T."/>
            <person name="Aebersold R."/>
            <person name="Robbe-Austerman S."/>
            <person name="Gordon S.V."/>
        </authorList>
    </citation>
    <scope>NUCLEOTIDE SEQUENCE [LARGE SCALE GENOMIC DNA]</scope>
    <scope>GENOME REANNOTATION</scope>
    <source>
        <strain>ATCC BAA-935 / AF2122/97</strain>
    </source>
</reference>
<name>ODP2_MYCBO</name>
<feature type="chain" id="PRO_0000162267" description="Dihydrolipoyllysine-residue acetyltransferase component of pyruvate dehydrogenase complex">
    <location>
        <begin position="1"/>
        <end position="553"/>
    </location>
</feature>
<feature type="domain" description="Lipoyl-binding 1" evidence="2">
    <location>
        <begin position="2"/>
        <end position="77"/>
    </location>
</feature>
<feature type="domain" description="Lipoyl-binding 2" evidence="2">
    <location>
        <begin position="121"/>
        <end position="196"/>
    </location>
</feature>
<feature type="domain" description="Peripheral subunit-binding (PSBD)" evidence="3">
    <location>
        <begin position="243"/>
        <end position="280"/>
    </location>
</feature>
<feature type="region of interest" description="Disordered" evidence="4">
    <location>
        <begin position="81"/>
        <end position="125"/>
    </location>
</feature>
<feature type="region of interest" description="Disordered" evidence="4">
    <location>
        <begin position="204"/>
        <end position="238"/>
    </location>
</feature>
<feature type="region of interest" description="Disordered" evidence="4">
    <location>
        <begin position="278"/>
        <end position="321"/>
    </location>
</feature>
<feature type="compositionally biased region" description="Low complexity" evidence="4">
    <location>
        <begin position="84"/>
        <end position="100"/>
    </location>
</feature>
<feature type="compositionally biased region" description="Pro residues" evidence="4">
    <location>
        <begin position="101"/>
        <end position="110"/>
    </location>
</feature>
<feature type="compositionally biased region" description="Pro residues" evidence="4">
    <location>
        <begin position="206"/>
        <end position="232"/>
    </location>
</feature>
<feature type="compositionally biased region" description="Low complexity" evidence="4">
    <location>
        <begin position="288"/>
        <end position="300"/>
    </location>
</feature>
<feature type="active site" evidence="1">
    <location>
        <position position="523"/>
    </location>
</feature>
<feature type="active site" evidence="1">
    <location>
        <position position="527"/>
    </location>
</feature>
<feature type="modified residue" description="N6-lipoyllysine" evidence="2">
    <location>
        <position position="43"/>
    </location>
</feature>
<feature type="modified residue" description="N6-lipoyllysine" evidence="2">
    <location>
        <position position="162"/>
    </location>
</feature>
<comment type="function">
    <text evidence="1">Component of the pyruvate dehydrogenase (PDH) complex, that catalyzes the overall conversion of pyruvate to acetyl-CoA and CO(2).</text>
</comment>
<comment type="catalytic activity">
    <reaction>
        <text>N(6)-[(R)-dihydrolipoyl]-L-lysyl-[protein] + acetyl-CoA = N(6)-[(R)-S(8)-acetyldihydrolipoyl]-L-lysyl-[protein] + CoA</text>
        <dbReference type="Rhea" id="RHEA:17017"/>
        <dbReference type="Rhea" id="RHEA-COMP:10475"/>
        <dbReference type="Rhea" id="RHEA-COMP:10478"/>
        <dbReference type="ChEBI" id="CHEBI:57287"/>
        <dbReference type="ChEBI" id="CHEBI:57288"/>
        <dbReference type="ChEBI" id="CHEBI:83100"/>
        <dbReference type="ChEBI" id="CHEBI:83111"/>
        <dbReference type="EC" id="2.3.1.12"/>
    </reaction>
</comment>
<comment type="cofactor">
    <cofactor evidence="1">
        <name>(R)-lipoate</name>
        <dbReference type="ChEBI" id="CHEBI:83088"/>
    </cofactor>
    <text evidence="1">Binds 2 lipoyl cofactors covalently.</text>
</comment>
<comment type="subunit">
    <text evidence="1">Forms a 24-polypeptide structural core with octahedral symmetry. Part of the PDH complex, consisting of multiple copies of AceE (E1), DlaT (E2) and Lpd (E3).</text>
</comment>
<comment type="similarity">
    <text evidence="5">Belongs to the 2-oxoacid dehydrogenase family.</text>
</comment>
<organism>
    <name type="scientific">Mycobacterium bovis (strain ATCC BAA-935 / AF2122/97)</name>
    <dbReference type="NCBI Taxonomy" id="233413"/>
    <lineage>
        <taxon>Bacteria</taxon>
        <taxon>Bacillati</taxon>
        <taxon>Actinomycetota</taxon>
        <taxon>Actinomycetes</taxon>
        <taxon>Mycobacteriales</taxon>
        <taxon>Mycobacteriaceae</taxon>
        <taxon>Mycobacterium</taxon>
        <taxon>Mycobacterium tuberculosis complex</taxon>
    </lineage>
</organism>
<sequence>MAFSVQMPALGESVTEGTVTRWLKQEGDTVELDEPLVEVSTDKVDTEIPSPAAGVLTKIIAQEDDTVEVGGELAVIGDAKDAGEAAAPAPEKVPAAQPESKPAPEPPPVQPTSGAPAGGDAKPVLMPELGESVTEGTVIRWLKKIGDSVQVDEPLVEVSTDKVDTEIPSPVAGVLVSISADEDATVPVGGELARIGVAADIGAAPAPKPAPKPVPEPAPTPKAEPAPSPPAAQPAGAAEGAPYVTPLVRKLASENNIDLAGVTGTGVGGRIRKQDVLAAAEQKKRAKAPAPAAQAAAAPAPKAPPAPAPALAHLRGTTQKASRIRQITANKTRESLQATAQLTQTHEVDMTKIVGLRARAKAAFAEREGVNLTFLPFFAKAVIDALKIHPNINASYNEDTKEITYYDAEHLGFAVDTEQGLLSPVIHDAGDLSLAGLARAIADIAARARSGNLKPDELSGGTFTITNIGSQGALFDTPILVPPQAAMLGTGAIVKRPRVVVDASGNESIGVRSVCYLPLTYDHRLIDGADAGRFLTTIKHRLEEGAFEADLGL</sequence>
<protein>
    <recommendedName>
        <fullName>Dihydrolipoyllysine-residue acetyltransferase component of pyruvate dehydrogenase complex</fullName>
        <ecNumber>2.3.1.12</ecNumber>
    </recommendedName>
    <alternativeName>
        <fullName>Dihydrolipoamide acetyltransferase component of pyruvate dehydrogenase complex</fullName>
    </alternativeName>
    <alternativeName>
        <fullName>Pyruvate dehydrogenase complex component E2</fullName>
        <shortName>PDH component E2</shortName>
    </alternativeName>
</protein>
<evidence type="ECO:0000250" key="1"/>
<evidence type="ECO:0000255" key="2">
    <source>
        <dbReference type="PROSITE-ProRule" id="PRU01066"/>
    </source>
</evidence>
<evidence type="ECO:0000255" key="3">
    <source>
        <dbReference type="PROSITE-ProRule" id="PRU01170"/>
    </source>
</evidence>
<evidence type="ECO:0000256" key="4">
    <source>
        <dbReference type="SAM" id="MobiDB-lite"/>
    </source>
</evidence>
<evidence type="ECO:0000305" key="5"/>
<dbReference type="EC" id="2.3.1.12"/>
<dbReference type="EMBL" id="LT708304">
    <property type="protein sequence ID" value="SIU00846.1"/>
    <property type="molecule type" value="Genomic_DNA"/>
</dbReference>
<dbReference type="RefSeq" id="NP_855887.1">
    <property type="nucleotide sequence ID" value="NC_002945.3"/>
</dbReference>
<dbReference type="RefSeq" id="WP_003411450.1">
    <property type="nucleotide sequence ID" value="NC_002945.4"/>
</dbReference>
<dbReference type="SMR" id="P65634"/>
<dbReference type="KEGG" id="mbo:BQ2027_MB2238"/>
<dbReference type="PATRIC" id="fig|233413.5.peg.2454"/>
<dbReference type="Proteomes" id="UP000001419">
    <property type="component" value="Chromosome"/>
</dbReference>
<dbReference type="GO" id="GO:0005737">
    <property type="term" value="C:cytoplasm"/>
    <property type="evidence" value="ECO:0007669"/>
    <property type="project" value="TreeGrafter"/>
</dbReference>
<dbReference type="GO" id="GO:0004742">
    <property type="term" value="F:dihydrolipoyllysine-residue acetyltransferase activity"/>
    <property type="evidence" value="ECO:0007669"/>
    <property type="project" value="UniProtKB-EC"/>
</dbReference>
<dbReference type="GO" id="GO:0031405">
    <property type="term" value="F:lipoic acid binding"/>
    <property type="evidence" value="ECO:0007669"/>
    <property type="project" value="TreeGrafter"/>
</dbReference>
<dbReference type="CDD" id="cd06849">
    <property type="entry name" value="lipoyl_domain"/>
    <property type="match status" value="2"/>
</dbReference>
<dbReference type="FunFam" id="2.40.50.100:FF:000023">
    <property type="entry name" value="Dihydrolipoamide acetyltransferase component of pyruvate dehydrogenase complex"/>
    <property type="match status" value="1"/>
</dbReference>
<dbReference type="FunFam" id="3.30.559.10:FF:000039">
    <property type="entry name" value="Dihydrolipoamide acetyltransferase component of pyruvate dehydrogenase complex"/>
    <property type="match status" value="1"/>
</dbReference>
<dbReference type="FunFam" id="4.10.320.10:FF:000008">
    <property type="entry name" value="Dihydrolipoamide acetyltransferase component of pyruvate dehydrogenase complex"/>
    <property type="match status" value="1"/>
</dbReference>
<dbReference type="Gene3D" id="2.40.50.100">
    <property type="match status" value="2"/>
</dbReference>
<dbReference type="Gene3D" id="3.30.559.10">
    <property type="entry name" value="Chloramphenicol acetyltransferase-like domain"/>
    <property type="match status" value="1"/>
</dbReference>
<dbReference type="Gene3D" id="4.10.320.10">
    <property type="entry name" value="E3-binding domain"/>
    <property type="match status" value="1"/>
</dbReference>
<dbReference type="InterPro" id="IPR003016">
    <property type="entry name" value="2-oxoA_DH_lipoyl-BS"/>
</dbReference>
<dbReference type="InterPro" id="IPR001078">
    <property type="entry name" value="2-oxoacid_DH_actylTfrase"/>
</dbReference>
<dbReference type="InterPro" id="IPR050743">
    <property type="entry name" value="2-oxoacid_DH_E2_comp"/>
</dbReference>
<dbReference type="InterPro" id="IPR014276">
    <property type="entry name" value="2-oxoglutarate_DH_E2"/>
</dbReference>
<dbReference type="InterPro" id="IPR000089">
    <property type="entry name" value="Biotin_lipoyl"/>
</dbReference>
<dbReference type="InterPro" id="IPR023213">
    <property type="entry name" value="CAT-like_dom_sf"/>
</dbReference>
<dbReference type="InterPro" id="IPR036625">
    <property type="entry name" value="E3-bd_dom_sf"/>
</dbReference>
<dbReference type="InterPro" id="IPR004167">
    <property type="entry name" value="PSBD"/>
</dbReference>
<dbReference type="InterPro" id="IPR011053">
    <property type="entry name" value="Single_hybrid_motif"/>
</dbReference>
<dbReference type="NCBIfam" id="TIGR02927">
    <property type="entry name" value="SucB_Actino"/>
    <property type="match status" value="1"/>
</dbReference>
<dbReference type="PANTHER" id="PTHR43178">
    <property type="entry name" value="DIHYDROLIPOAMIDE ACETYLTRANSFERASE COMPONENT OF PYRUVATE DEHYDROGENASE COMPLEX"/>
    <property type="match status" value="1"/>
</dbReference>
<dbReference type="PANTHER" id="PTHR43178:SF5">
    <property type="entry name" value="LIPOAMIDE ACYLTRANSFERASE COMPONENT OF BRANCHED-CHAIN ALPHA-KETO ACID DEHYDROGENASE COMPLEX, MITOCHONDRIAL"/>
    <property type="match status" value="1"/>
</dbReference>
<dbReference type="Pfam" id="PF00198">
    <property type="entry name" value="2-oxoacid_dh"/>
    <property type="match status" value="1"/>
</dbReference>
<dbReference type="Pfam" id="PF00364">
    <property type="entry name" value="Biotin_lipoyl"/>
    <property type="match status" value="2"/>
</dbReference>
<dbReference type="Pfam" id="PF02817">
    <property type="entry name" value="E3_binding"/>
    <property type="match status" value="1"/>
</dbReference>
<dbReference type="SUPFAM" id="SSF52777">
    <property type="entry name" value="CoA-dependent acyltransferases"/>
    <property type="match status" value="1"/>
</dbReference>
<dbReference type="SUPFAM" id="SSF47005">
    <property type="entry name" value="Peripheral subunit-binding domain of 2-oxo acid dehydrogenase complex"/>
    <property type="match status" value="1"/>
</dbReference>
<dbReference type="SUPFAM" id="SSF51230">
    <property type="entry name" value="Single hybrid motif"/>
    <property type="match status" value="2"/>
</dbReference>
<dbReference type="PROSITE" id="PS50968">
    <property type="entry name" value="BIOTINYL_LIPOYL"/>
    <property type="match status" value="2"/>
</dbReference>
<dbReference type="PROSITE" id="PS00189">
    <property type="entry name" value="LIPOYL"/>
    <property type="match status" value="2"/>
</dbReference>
<dbReference type="PROSITE" id="PS51826">
    <property type="entry name" value="PSBD"/>
    <property type="match status" value="1"/>
</dbReference>
<gene>
    <name type="primary">dlaT</name>
    <name type="synonym">sucB</name>
    <name type="ordered locus">BQ2027_MB2238</name>
</gene>
<proteinExistence type="inferred from homology"/>